<dbReference type="EC" id="7.1.1.-" evidence="1"/>
<dbReference type="EMBL" id="AP009375">
    <property type="protein sequence ID" value="BAF50553.1"/>
    <property type="molecule type" value="Genomic_DNA"/>
</dbReference>
<dbReference type="RefSeq" id="YP_001123729.1">
    <property type="nucleotide sequence ID" value="NC_009274.1"/>
</dbReference>
<dbReference type="SMR" id="A4QLJ8"/>
<dbReference type="GeneID" id="4964898"/>
<dbReference type="GO" id="GO:0009535">
    <property type="term" value="C:chloroplast thylakoid membrane"/>
    <property type="evidence" value="ECO:0007669"/>
    <property type="project" value="UniProtKB-SubCell"/>
</dbReference>
<dbReference type="GO" id="GO:0045271">
    <property type="term" value="C:respiratory chain complex I"/>
    <property type="evidence" value="ECO:0007669"/>
    <property type="project" value="TreeGrafter"/>
</dbReference>
<dbReference type="GO" id="GO:0051539">
    <property type="term" value="F:4 iron, 4 sulfur cluster binding"/>
    <property type="evidence" value="ECO:0007669"/>
    <property type="project" value="UniProtKB-KW"/>
</dbReference>
<dbReference type="GO" id="GO:0005506">
    <property type="term" value="F:iron ion binding"/>
    <property type="evidence" value="ECO:0007669"/>
    <property type="project" value="UniProtKB-UniRule"/>
</dbReference>
<dbReference type="GO" id="GO:0008137">
    <property type="term" value="F:NADH dehydrogenase (ubiquinone) activity"/>
    <property type="evidence" value="ECO:0007669"/>
    <property type="project" value="InterPro"/>
</dbReference>
<dbReference type="GO" id="GO:0048038">
    <property type="term" value="F:quinone binding"/>
    <property type="evidence" value="ECO:0007669"/>
    <property type="project" value="UniProtKB-KW"/>
</dbReference>
<dbReference type="GO" id="GO:0009060">
    <property type="term" value="P:aerobic respiration"/>
    <property type="evidence" value="ECO:0007669"/>
    <property type="project" value="TreeGrafter"/>
</dbReference>
<dbReference type="GO" id="GO:0015990">
    <property type="term" value="P:electron transport coupled proton transport"/>
    <property type="evidence" value="ECO:0007669"/>
    <property type="project" value="TreeGrafter"/>
</dbReference>
<dbReference type="GO" id="GO:0019684">
    <property type="term" value="P:photosynthesis, light reaction"/>
    <property type="evidence" value="ECO:0007669"/>
    <property type="project" value="UniProtKB-UniRule"/>
</dbReference>
<dbReference type="FunFam" id="3.40.50.12280:FF:000003">
    <property type="entry name" value="NAD(P)H-quinone oxidoreductase subunit K, chloroplastic"/>
    <property type="match status" value="1"/>
</dbReference>
<dbReference type="Gene3D" id="3.40.50.12280">
    <property type="match status" value="1"/>
</dbReference>
<dbReference type="HAMAP" id="MF_01356">
    <property type="entry name" value="NDH1_NuoB"/>
    <property type="match status" value="1"/>
</dbReference>
<dbReference type="InterPro" id="IPR006137">
    <property type="entry name" value="NADH_UbQ_OxRdtase-like_20kDa"/>
</dbReference>
<dbReference type="InterPro" id="IPR006138">
    <property type="entry name" value="NADH_UQ_OxRdtase_20Kd_su"/>
</dbReference>
<dbReference type="NCBIfam" id="TIGR01957">
    <property type="entry name" value="nuoB_fam"/>
    <property type="match status" value="1"/>
</dbReference>
<dbReference type="NCBIfam" id="NF005012">
    <property type="entry name" value="PRK06411.1"/>
    <property type="match status" value="1"/>
</dbReference>
<dbReference type="PANTHER" id="PTHR11995">
    <property type="entry name" value="NADH DEHYDROGENASE"/>
    <property type="match status" value="1"/>
</dbReference>
<dbReference type="PANTHER" id="PTHR11995:SF14">
    <property type="entry name" value="NADH DEHYDROGENASE [UBIQUINONE] IRON-SULFUR PROTEIN 7, MITOCHONDRIAL"/>
    <property type="match status" value="1"/>
</dbReference>
<dbReference type="Pfam" id="PF01058">
    <property type="entry name" value="Oxidored_q6"/>
    <property type="match status" value="1"/>
</dbReference>
<dbReference type="SUPFAM" id="SSF56770">
    <property type="entry name" value="HydA/Nqo6-like"/>
    <property type="match status" value="1"/>
</dbReference>
<dbReference type="PROSITE" id="PS01150">
    <property type="entry name" value="COMPLEX1_20K"/>
    <property type="match status" value="1"/>
</dbReference>
<name>NDHK_LOBMA</name>
<protein>
    <recommendedName>
        <fullName evidence="1">NAD(P)H-quinone oxidoreductase subunit K, chloroplastic</fullName>
        <ecNumber evidence="1">7.1.1.-</ecNumber>
    </recommendedName>
    <alternativeName>
        <fullName evidence="1">NAD(P)H dehydrogenase subunit K</fullName>
    </alternativeName>
    <alternativeName>
        <fullName evidence="1">NADH-plastoquinone oxidoreductase subunit K</fullName>
    </alternativeName>
</protein>
<organism>
    <name type="scientific">Lobularia maritima</name>
    <name type="common">Sweet alyssum</name>
    <name type="synonym">Alyssum maritimum</name>
    <dbReference type="NCBI Taxonomy" id="226051"/>
    <lineage>
        <taxon>Eukaryota</taxon>
        <taxon>Viridiplantae</taxon>
        <taxon>Streptophyta</taxon>
        <taxon>Embryophyta</taxon>
        <taxon>Tracheophyta</taxon>
        <taxon>Spermatophyta</taxon>
        <taxon>Magnoliopsida</taxon>
        <taxon>eudicotyledons</taxon>
        <taxon>Gunneridae</taxon>
        <taxon>Pentapetalae</taxon>
        <taxon>rosids</taxon>
        <taxon>malvids</taxon>
        <taxon>Brassicales</taxon>
        <taxon>Brassicaceae</taxon>
        <taxon>Anastaticeae</taxon>
        <taxon>Lobularia</taxon>
    </lineage>
</organism>
<proteinExistence type="inferred from homology"/>
<evidence type="ECO:0000255" key="1">
    <source>
        <dbReference type="HAMAP-Rule" id="MF_01356"/>
    </source>
</evidence>
<reference key="1">
    <citation type="submission" date="2007-03" db="EMBL/GenBank/DDBJ databases">
        <title>Sequencing analysis of Lobularia maritima chloroplast DNA.</title>
        <authorList>
            <person name="Hosouchi T."/>
            <person name="Tsuruoka H."/>
            <person name="Kotani H."/>
        </authorList>
    </citation>
    <scope>NUCLEOTIDE SEQUENCE [LARGE SCALE GENOMIC DNA]</scope>
</reference>
<sequence>MNSIKFPVLDRTTKNSVISTTLNDLSNWSRLSSLWPLLYGTSCCFIEFASLIGSRFDFDRYGLVPRSSPRQADLILTAGTVTMKMAPSLVRLYEQMPEPKYVIAMGACTITGGMFSTDSYSTVRGVDKLIPVDVYLPGCPPKPEAVIDAITKLRKKIAREIYKDRIIPQRGNRCFTTNHKFFFVRSTQTGNYDQELLYPPSSTSEISTETFFKYKSPVSSHELVN</sequence>
<geneLocation type="chloroplast"/>
<accession>A4QLJ8</accession>
<gene>
    <name evidence="1" type="primary">ndhK</name>
</gene>
<keyword id="KW-0004">4Fe-4S</keyword>
<keyword id="KW-0150">Chloroplast</keyword>
<keyword id="KW-0408">Iron</keyword>
<keyword id="KW-0411">Iron-sulfur</keyword>
<keyword id="KW-0472">Membrane</keyword>
<keyword id="KW-0479">Metal-binding</keyword>
<keyword id="KW-0520">NAD</keyword>
<keyword id="KW-0521">NADP</keyword>
<keyword id="KW-0934">Plastid</keyword>
<keyword id="KW-0618">Plastoquinone</keyword>
<keyword id="KW-0874">Quinone</keyword>
<keyword id="KW-0793">Thylakoid</keyword>
<keyword id="KW-1278">Translocase</keyword>
<keyword id="KW-0813">Transport</keyword>
<comment type="function">
    <text evidence="1">NDH shuttles electrons from NAD(P)H:plastoquinone, via FMN and iron-sulfur (Fe-S) centers, to quinones in the photosynthetic chain and possibly in a chloroplast respiratory chain. The immediate electron acceptor for the enzyme in this species is believed to be plastoquinone. Couples the redox reaction to proton translocation, and thus conserves the redox energy in a proton gradient.</text>
</comment>
<comment type="catalytic activity">
    <reaction evidence="1">
        <text>a plastoquinone + NADH + (n+1) H(+)(in) = a plastoquinol + NAD(+) + n H(+)(out)</text>
        <dbReference type="Rhea" id="RHEA:42608"/>
        <dbReference type="Rhea" id="RHEA-COMP:9561"/>
        <dbReference type="Rhea" id="RHEA-COMP:9562"/>
        <dbReference type="ChEBI" id="CHEBI:15378"/>
        <dbReference type="ChEBI" id="CHEBI:17757"/>
        <dbReference type="ChEBI" id="CHEBI:57540"/>
        <dbReference type="ChEBI" id="CHEBI:57945"/>
        <dbReference type="ChEBI" id="CHEBI:62192"/>
    </reaction>
</comment>
<comment type="catalytic activity">
    <reaction evidence="1">
        <text>a plastoquinone + NADPH + (n+1) H(+)(in) = a plastoquinol + NADP(+) + n H(+)(out)</text>
        <dbReference type="Rhea" id="RHEA:42612"/>
        <dbReference type="Rhea" id="RHEA-COMP:9561"/>
        <dbReference type="Rhea" id="RHEA-COMP:9562"/>
        <dbReference type="ChEBI" id="CHEBI:15378"/>
        <dbReference type="ChEBI" id="CHEBI:17757"/>
        <dbReference type="ChEBI" id="CHEBI:57783"/>
        <dbReference type="ChEBI" id="CHEBI:58349"/>
        <dbReference type="ChEBI" id="CHEBI:62192"/>
    </reaction>
</comment>
<comment type="cofactor">
    <cofactor evidence="1">
        <name>[4Fe-4S] cluster</name>
        <dbReference type="ChEBI" id="CHEBI:49883"/>
    </cofactor>
    <text evidence="1">Binds 1 [4Fe-4S] cluster.</text>
</comment>
<comment type="subunit">
    <text evidence="1">NDH is composed of at least 16 different subunits, 5 of which are encoded in the nucleus.</text>
</comment>
<comment type="subcellular location">
    <subcellularLocation>
        <location evidence="1">Plastid</location>
        <location evidence="1">Chloroplast thylakoid membrane</location>
        <topology evidence="1">Peripheral membrane protein</topology>
        <orientation evidence="1">Stromal side</orientation>
    </subcellularLocation>
</comment>
<comment type="similarity">
    <text evidence="1">Belongs to the complex I 20 kDa subunit family.</text>
</comment>
<feature type="chain" id="PRO_0000358557" description="NAD(P)H-quinone oxidoreductase subunit K, chloroplastic">
    <location>
        <begin position="1"/>
        <end position="225"/>
    </location>
</feature>
<feature type="binding site" evidence="1">
    <location>
        <position position="43"/>
    </location>
    <ligand>
        <name>[4Fe-4S] cluster</name>
        <dbReference type="ChEBI" id="CHEBI:49883"/>
    </ligand>
</feature>
<feature type="binding site" evidence="1">
    <location>
        <position position="44"/>
    </location>
    <ligand>
        <name>[4Fe-4S] cluster</name>
        <dbReference type="ChEBI" id="CHEBI:49883"/>
    </ligand>
</feature>
<feature type="binding site" evidence="1">
    <location>
        <position position="108"/>
    </location>
    <ligand>
        <name>[4Fe-4S] cluster</name>
        <dbReference type="ChEBI" id="CHEBI:49883"/>
    </ligand>
</feature>
<feature type="binding site" evidence="1">
    <location>
        <position position="139"/>
    </location>
    <ligand>
        <name>[4Fe-4S] cluster</name>
        <dbReference type="ChEBI" id="CHEBI:49883"/>
    </ligand>
</feature>